<dbReference type="EMBL" id="CP000962">
    <property type="protein sequence ID" value="ACA54928.1"/>
    <property type="molecule type" value="Genomic_DNA"/>
</dbReference>
<dbReference type="RefSeq" id="WP_003357520.1">
    <property type="nucleotide sequence ID" value="NC_010520.1"/>
</dbReference>
<dbReference type="SMR" id="B1L0T5"/>
<dbReference type="GeneID" id="92939857"/>
<dbReference type="KEGG" id="cbl:CLK_2528"/>
<dbReference type="HOGENOM" id="CLU_169643_1_1_9"/>
<dbReference type="GO" id="GO:0022625">
    <property type="term" value="C:cytosolic large ribosomal subunit"/>
    <property type="evidence" value="ECO:0007669"/>
    <property type="project" value="TreeGrafter"/>
</dbReference>
<dbReference type="GO" id="GO:0003735">
    <property type="term" value="F:structural constituent of ribosome"/>
    <property type="evidence" value="ECO:0007669"/>
    <property type="project" value="InterPro"/>
</dbReference>
<dbReference type="GO" id="GO:0006412">
    <property type="term" value="P:translation"/>
    <property type="evidence" value="ECO:0007669"/>
    <property type="project" value="UniProtKB-UniRule"/>
</dbReference>
<dbReference type="FunFam" id="4.10.410.60:FF:000001">
    <property type="entry name" value="50S ribosomal protein L35"/>
    <property type="match status" value="1"/>
</dbReference>
<dbReference type="Gene3D" id="4.10.410.60">
    <property type="match status" value="1"/>
</dbReference>
<dbReference type="HAMAP" id="MF_00514">
    <property type="entry name" value="Ribosomal_bL35"/>
    <property type="match status" value="1"/>
</dbReference>
<dbReference type="InterPro" id="IPR001706">
    <property type="entry name" value="Ribosomal_bL35"/>
</dbReference>
<dbReference type="InterPro" id="IPR021137">
    <property type="entry name" value="Ribosomal_bL35-like"/>
</dbReference>
<dbReference type="InterPro" id="IPR018265">
    <property type="entry name" value="Ribosomal_bL35_CS"/>
</dbReference>
<dbReference type="InterPro" id="IPR037229">
    <property type="entry name" value="Ribosomal_bL35_sf"/>
</dbReference>
<dbReference type="NCBIfam" id="TIGR00001">
    <property type="entry name" value="rpmI_bact"/>
    <property type="match status" value="1"/>
</dbReference>
<dbReference type="PANTHER" id="PTHR33343">
    <property type="entry name" value="54S RIBOSOMAL PROTEIN BL35M"/>
    <property type="match status" value="1"/>
</dbReference>
<dbReference type="PANTHER" id="PTHR33343:SF1">
    <property type="entry name" value="LARGE RIBOSOMAL SUBUNIT PROTEIN BL35M"/>
    <property type="match status" value="1"/>
</dbReference>
<dbReference type="Pfam" id="PF01632">
    <property type="entry name" value="Ribosomal_L35p"/>
    <property type="match status" value="1"/>
</dbReference>
<dbReference type="PRINTS" id="PR00064">
    <property type="entry name" value="RIBOSOMALL35"/>
</dbReference>
<dbReference type="SUPFAM" id="SSF143034">
    <property type="entry name" value="L35p-like"/>
    <property type="match status" value="1"/>
</dbReference>
<dbReference type="PROSITE" id="PS00936">
    <property type="entry name" value="RIBOSOMAL_L35"/>
    <property type="match status" value="1"/>
</dbReference>
<comment type="similarity">
    <text evidence="1">Belongs to the bacterial ribosomal protein bL35 family.</text>
</comment>
<proteinExistence type="inferred from homology"/>
<gene>
    <name evidence="1" type="primary">rpmI</name>
    <name type="ordered locus">CLK_2528</name>
</gene>
<feature type="chain" id="PRO_1000127329" description="Large ribosomal subunit protein bL35">
    <location>
        <begin position="1"/>
        <end position="65"/>
    </location>
</feature>
<sequence length="65" mass="7507">MPKMKTKRAAAKRFKVTGTGKLKRAKAFKSHILTKKSRKTKRNLRKAGYVSESQEKVMKKVLPYL</sequence>
<protein>
    <recommendedName>
        <fullName evidence="1">Large ribosomal subunit protein bL35</fullName>
    </recommendedName>
    <alternativeName>
        <fullName evidence="2">50S ribosomal protein L35</fullName>
    </alternativeName>
</protein>
<name>RL35_CLOBM</name>
<accession>B1L0T5</accession>
<keyword id="KW-0687">Ribonucleoprotein</keyword>
<keyword id="KW-0689">Ribosomal protein</keyword>
<evidence type="ECO:0000255" key="1">
    <source>
        <dbReference type="HAMAP-Rule" id="MF_00514"/>
    </source>
</evidence>
<evidence type="ECO:0000305" key="2"/>
<reference key="1">
    <citation type="journal article" date="2007" name="PLoS ONE">
        <title>Analysis of the neurotoxin complex genes in Clostridium botulinum A1-A4 and B1 strains: BoNT/A3, /Ba4 and /B1 clusters are located within plasmids.</title>
        <authorList>
            <person name="Smith T.J."/>
            <person name="Hill K.K."/>
            <person name="Foley B.T."/>
            <person name="Detter J.C."/>
            <person name="Munk A.C."/>
            <person name="Bruce D.C."/>
            <person name="Doggett N.A."/>
            <person name="Smith L.A."/>
            <person name="Marks J.D."/>
            <person name="Xie G."/>
            <person name="Brettin T.S."/>
        </authorList>
    </citation>
    <scope>NUCLEOTIDE SEQUENCE [LARGE SCALE GENOMIC DNA]</scope>
    <source>
        <strain>Loch Maree / Type A3</strain>
    </source>
</reference>
<organism>
    <name type="scientific">Clostridium botulinum (strain Loch Maree / Type A3)</name>
    <dbReference type="NCBI Taxonomy" id="498214"/>
    <lineage>
        <taxon>Bacteria</taxon>
        <taxon>Bacillati</taxon>
        <taxon>Bacillota</taxon>
        <taxon>Clostridia</taxon>
        <taxon>Eubacteriales</taxon>
        <taxon>Clostridiaceae</taxon>
        <taxon>Clostridium</taxon>
    </lineage>
</organism>